<name>T2AG_ORYSJ</name>
<keyword id="KW-0396">Initiation factor</keyword>
<keyword id="KW-0539">Nucleus</keyword>
<keyword id="KW-0611">Plant defense</keyword>
<keyword id="KW-0648">Protein biosynthesis</keyword>
<keyword id="KW-1185">Reference proteome</keyword>
<keyword id="KW-0804">Transcription</keyword>
<keyword id="KW-0805">Transcription regulation</keyword>
<accession>Q0DLD3</accession>
<accession>Q5SDB6</accession>
<accession>Q65X27</accession>
<accession>Q7FPX2</accession>
<accession>Q94HL5</accession>
<feature type="chain" id="PRO_0000194051" description="Transcription initiation factor IIA subunit 2">
    <location>
        <begin position="1"/>
        <end position="106"/>
    </location>
</feature>
<comment type="function">
    <text evidence="1">TFIIA is a component of the transcription machinery of RNA polymerase II and plays an important role in transcriptional activation. TFIIA in a complex with TBP mediates transcriptional activity (By similarity). Protein involved in the resistance to X.oryzae.</text>
</comment>
<comment type="subunit">
    <text evidence="1">TFIIA is a heterodimer of the large unprocessed subunit 1 and a small subunit gamma. It was originally believed to be a heterotrimer of an alpha, a beta and a gamma subunit (By similarity).</text>
</comment>
<comment type="subcellular location">
    <subcellularLocation>
        <location evidence="1">Nucleus</location>
    </subcellularLocation>
</comment>
<comment type="miscellaneous">
    <text>The displayed sequence corresponds to the form of the protein present in strains susceptible to X.oryzae. Substitution of Val-39 to Glu-39 in cultivar indica IRBB5 confers resistance to X.oryzae.</text>
</comment>
<comment type="similarity">
    <text evidence="2">Belongs to the TFIIA subunit 2 family.</text>
</comment>
<gene>
    <name type="primary">TFIIAy</name>
    <name type="synonym">XA5</name>
    <name type="ordered locus">Os05g0107700</name>
    <name type="ordered locus">LOC_Os05g01710</name>
    <name type="ORF">OSJNBa0068N01.8</name>
</gene>
<proteinExistence type="inferred from homology"/>
<dbReference type="EMBL" id="AC129716">
    <property type="protein sequence ID" value="AAU44131.1"/>
    <property type="molecule type" value="Genomic_DNA"/>
</dbReference>
<dbReference type="EMBL" id="AP008211">
    <property type="protein sequence ID" value="BAF16340.1"/>
    <property type="molecule type" value="Genomic_DNA"/>
</dbReference>
<dbReference type="EMBL" id="AP014961">
    <property type="protein sequence ID" value="BAS91888.1"/>
    <property type="molecule type" value="Genomic_DNA"/>
</dbReference>
<dbReference type="EMBL" id="AK065182">
    <property type="status" value="NOT_ANNOTATED_CDS"/>
    <property type="molecule type" value="mRNA"/>
</dbReference>
<dbReference type="RefSeq" id="XP_015640634.1">
    <property type="nucleotide sequence ID" value="XM_015785148.1"/>
</dbReference>
<dbReference type="RefSeq" id="XP_015640635.1">
    <property type="nucleotide sequence ID" value="XM_015785149.1"/>
</dbReference>
<dbReference type="RefSeq" id="XP_015640636.1">
    <property type="nucleotide sequence ID" value="XM_015785150.1"/>
</dbReference>
<dbReference type="SMR" id="Q0DLD3"/>
<dbReference type="FunCoup" id="Q0DLD3">
    <property type="interactions" value="1976"/>
</dbReference>
<dbReference type="STRING" id="39947.Q0DLD3"/>
<dbReference type="PaxDb" id="39947-Q0DLD3"/>
<dbReference type="EnsemblPlants" id="Os05t0107700-01">
    <property type="protein sequence ID" value="Os05t0107700-01"/>
    <property type="gene ID" value="Os05g0107700"/>
</dbReference>
<dbReference type="Gramene" id="Os05t0107700-01">
    <property type="protein sequence ID" value="Os05t0107700-01"/>
    <property type="gene ID" value="Os05g0107700"/>
</dbReference>
<dbReference type="KEGG" id="dosa:Os05g0107700"/>
<dbReference type="eggNOG" id="KOG3463">
    <property type="taxonomic scope" value="Eukaryota"/>
</dbReference>
<dbReference type="HOGENOM" id="CLU_112964_3_1_1"/>
<dbReference type="InParanoid" id="Q0DLD3"/>
<dbReference type="OMA" id="QYYELYR"/>
<dbReference type="OrthoDB" id="586585at2759"/>
<dbReference type="Proteomes" id="UP000000763">
    <property type="component" value="Chromosome 5"/>
</dbReference>
<dbReference type="Proteomes" id="UP000059680">
    <property type="component" value="Chromosome 5"/>
</dbReference>
<dbReference type="ExpressionAtlas" id="Q0DLD3">
    <property type="expression patterns" value="baseline and differential"/>
</dbReference>
<dbReference type="GO" id="GO:0005672">
    <property type="term" value="C:transcription factor TFIIA complex"/>
    <property type="evidence" value="ECO:0000318"/>
    <property type="project" value="GO_Central"/>
</dbReference>
<dbReference type="GO" id="GO:0016251">
    <property type="term" value="F:RNA polymerase II general transcription initiation factor activity"/>
    <property type="evidence" value="ECO:0000318"/>
    <property type="project" value="GO_Central"/>
</dbReference>
<dbReference type="GO" id="GO:0017025">
    <property type="term" value="F:TBP-class protein binding"/>
    <property type="evidence" value="ECO:0000318"/>
    <property type="project" value="GO_Central"/>
</dbReference>
<dbReference type="GO" id="GO:0003743">
    <property type="term" value="F:translation initiation factor activity"/>
    <property type="evidence" value="ECO:0007669"/>
    <property type="project" value="UniProtKB-KW"/>
</dbReference>
<dbReference type="GO" id="GO:0006952">
    <property type="term" value="P:defense response"/>
    <property type="evidence" value="ECO:0007669"/>
    <property type="project" value="UniProtKB-KW"/>
</dbReference>
<dbReference type="GO" id="GO:0051123">
    <property type="term" value="P:RNA polymerase II preinitiation complex assembly"/>
    <property type="evidence" value="ECO:0000318"/>
    <property type="project" value="GO_Central"/>
</dbReference>
<dbReference type="CDD" id="cd10014">
    <property type="entry name" value="TFIIA_gamma_C"/>
    <property type="match status" value="1"/>
</dbReference>
<dbReference type="CDD" id="cd10145">
    <property type="entry name" value="TFIIA_gamma_N"/>
    <property type="match status" value="1"/>
</dbReference>
<dbReference type="FunFam" id="1.10.287.190:FF:000001">
    <property type="entry name" value="Transcription initiation factor IIA subunit 2"/>
    <property type="match status" value="1"/>
</dbReference>
<dbReference type="FunFam" id="2.30.18.10:FF:000001">
    <property type="entry name" value="Transcription initiation factor IIA subunit 2"/>
    <property type="match status" value="1"/>
</dbReference>
<dbReference type="Gene3D" id="2.30.18.10">
    <property type="entry name" value="Transcription factor IIA (TFIIA), beta-barrel domain"/>
    <property type="match status" value="1"/>
</dbReference>
<dbReference type="Gene3D" id="1.10.287.190">
    <property type="entry name" value="Transcription factor IIA gamma subunit, alpha-helical domain"/>
    <property type="match status" value="1"/>
</dbReference>
<dbReference type="InterPro" id="IPR009083">
    <property type="entry name" value="TFIIA_a-hlx"/>
</dbReference>
<dbReference type="InterPro" id="IPR009088">
    <property type="entry name" value="TFIIA_b-brl"/>
</dbReference>
<dbReference type="InterPro" id="IPR003194">
    <property type="entry name" value="TFIIA_gsu"/>
</dbReference>
<dbReference type="InterPro" id="IPR015871">
    <property type="entry name" value="TFIIA_gsu_C"/>
</dbReference>
<dbReference type="InterPro" id="IPR015872">
    <property type="entry name" value="TFIIA_gsu_N"/>
</dbReference>
<dbReference type="PANTHER" id="PTHR10966">
    <property type="entry name" value="TRANSCRIPTION INITIATION FACTOR IIA SUBUNIT 2"/>
    <property type="match status" value="1"/>
</dbReference>
<dbReference type="Pfam" id="PF02751">
    <property type="entry name" value="TFIIA_gamma_C"/>
    <property type="match status" value="1"/>
</dbReference>
<dbReference type="Pfam" id="PF02268">
    <property type="entry name" value="TFIIA_gamma_N"/>
    <property type="match status" value="1"/>
</dbReference>
<dbReference type="PIRSF" id="PIRSF009415">
    <property type="entry name" value="Hum_TFIIA_gamma"/>
    <property type="match status" value="1"/>
</dbReference>
<dbReference type="SUPFAM" id="SSF47396">
    <property type="entry name" value="Transcription factor IIA (TFIIA), alpha-helical domain"/>
    <property type="match status" value="1"/>
</dbReference>
<dbReference type="SUPFAM" id="SSF50784">
    <property type="entry name" value="Transcription factor IIA (TFIIA), beta-barrel domain"/>
    <property type="match status" value="1"/>
</dbReference>
<reference key="1">
    <citation type="journal article" date="2005" name="Mol. Genet. Genomics">
        <title>A fine physical map of the rice chromosome 5.</title>
        <authorList>
            <person name="Cheng C.-H."/>
            <person name="Chung M.C."/>
            <person name="Liu S.-M."/>
            <person name="Chen S.-K."/>
            <person name="Kao F.Y."/>
            <person name="Lin S.-J."/>
            <person name="Hsiao S.-H."/>
            <person name="Tseng I.C."/>
            <person name="Hsing Y.-I.C."/>
            <person name="Wu H.-P."/>
            <person name="Chen C.-S."/>
            <person name="Shaw J.-F."/>
            <person name="Wu J."/>
            <person name="Matsumoto T."/>
            <person name="Sasaki T."/>
            <person name="Chen H.-C."/>
            <person name="Chow T.-Y."/>
        </authorList>
    </citation>
    <scope>NUCLEOTIDE SEQUENCE [LARGE SCALE GENOMIC DNA]</scope>
    <source>
        <strain>cv. Nipponbare</strain>
    </source>
</reference>
<reference key="2">
    <citation type="journal article" date="2005" name="Nature">
        <title>The map-based sequence of the rice genome.</title>
        <authorList>
            <consortium name="International rice genome sequencing project (IRGSP)"/>
        </authorList>
    </citation>
    <scope>NUCLEOTIDE SEQUENCE [LARGE SCALE GENOMIC DNA]</scope>
    <source>
        <strain>cv. Nipponbare</strain>
    </source>
</reference>
<reference key="3">
    <citation type="journal article" date="2008" name="Nucleic Acids Res.">
        <title>The rice annotation project database (RAP-DB): 2008 update.</title>
        <authorList>
            <consortium name="The rice annotation project (RAP)"/>
        </authorList>
    </citation>
    <scope>GENOME REANNOTATION</scope>
    <source>
        <strain>cv. Nipponbare</strain>
    </source>
</reference>
<reference key="4">
    <citation type="journal article" date="2013" name="Rice">
        <title>Improvement of the Oryza sativa Nipponbare reference genome using next generation sequence and optical map data.</title>
        <authorList>
            <person name="Kawahara Y."/>
            <person name="de la Bastide M."/>
            <person name="Hamilton J.P."/>
            <person name="Kanamori H."/>
            <person name="McCombie W.R."/>
            <person name="Ouyang S."/>
            <person name="Schwartz D.C."/>
            <person name="Tanaka T."/>
            <person name="Wu J."/>
            <person name="Zhou S."/>
            <person name="Childs K.L."/>
            <person name="Davidson R.M."/>
            <person name="Lin H."/>
            <person name="Quesada-Ocampo L."/>
            <person name="Vaillancourt B."/>
            <person name="Sakai H."/>
            <person name="Lee S.S."/>
            <person name="Kim J."/>
            <person name="Numa H."/>
            <person name="Itoh T."/>
            <person name="Buell C.R."/>
            <person name="Matsumoto T."/>
        </authorList>
    </citation>
    <scope>GENOME REANNOTATION</scope>
    <source>
        <strain>cv. Nipponbare</strain>
    </source>
</reference>
<reference key="5">
    <citation type="journal article" date="2003" name="Science">
        <title>Collection, mapping, and annotation of over 28,000 cDNA clones from japonica rice.</title>
        <authorList>
            <consortium name="The rice full-length cDNA consortium"/>
        </authorList>
    </citation>
    <scope>NUCLEOTIDE SEQUENCE [LARGE SCALE MRNA]</scope>
    <source>
        <strain>cv. Nipponbare</strain>
    </source>
</reference>
<evidence type="ECO:0000250" key="1"/>
<evidence type="ECO:0000305" key="2"/>
<sequence length="106" mass="11970">MATFELYRRSTIGMCLTETLDEMVSSGTLSPELAIQVLVQFDKSMTEALENQVKSKVSIKGHLHTYRFCDNVWTFILTEASFKNEETTEQVGKVKIVACDSKLLSQ</sequence>
<organism>
    <name type="scientific">Oryza sativa subsp. japonica</name>
    <name type="common">Rice</name>
    <dbReference type="NCBI Taxonomy" id="39947"/>
    <lineage>
        <taxon>Eukaryota</taxon>
        <taxon>Viridiplantae</taxon>
        <taxon>Streptophyta</taxon>
        <taxon>Embryophyta</taxon>
        <taxon>Tracheophyta</taxon>
        <taxon>Spermatophyta</taxon>
        <taxon>Magnoliopsida</taxon>
        <taxon>Liliopsida</taxon>
        <taxon>Poales</taxon>
        <taxon>Poaceae</taxon>
        <taxon>BOP clade</taxon>
        <taxon>Oryzoideae</taxon>
        <taxon>Oryzeae</taxon>
        <taxon>Oryzinae</taxon>
        <taxon>Oryza</taxon>
        <taxon>Oryza sativa</taxon>
    </lineage>
</organism>
<protein>
    <recommendedName>
        <fullName>Transcription initiation factor IIA subunit 2</fullName>
    </recommendedName>
    <alternativeName>
        <fullName>General transcription factor IIA subunit 2</fullName>
    </alternativeName>
    <alternativeName>
        <fullName>Transcription initiation factor IIA gamma chain</fullName>
        <shortName>TFIIA-gamma</shortName>
    </alternativeName>
</protein>